<accession>B8CKI4</accession>
<evidence type="ECO:0000255" key="1">
    <source>
        <dbReference type="HAMAP-Rule" id="MF_00592"/>
    </source>
</evidence>
<organism>
    <name type="scientific">Shewanella piezotolerans (strain WP3 / JCM 13877)</name>
    <dbReference type="NCBI Taxonomy" id="225849"/>
    <lineage>
        <taxon>Bacteria</taxon>
        <taxon>Pseudomonadati</taxon>
        <taxon>Pseudomonadota</taxon>
        <taxon>Gammaproteobacteria</taxon>
        <taxon>Alteromonadales</taxon>
        <taxon>Shewanellaceae</taxon>
        <taxon>Shewanella</taxon>
    </lineage>
</organism>
<keyword id="KW-0963">Cytoplasm</keyword>
<keyword id="KW-0456">Lyase</keyword>
<keyword id="KW-0704">Schiff base</keyword>
<sequence length="257" mass="27023">MSDLKKAAQQAINLMDLTTLNDDDTDQKVIDLCHKAKTPAGDTAAICIYPRFIPIARKTLNEIGGDDIKIATVTNFPHGNDDIAIAVLETRAAVAYGADEVDVVFPYRALMAGNETVGFELVKACKEACGDEAILKVIIESGVLADPALIRKASELSIDAGADFIKTSTGKVAVNATLEAAEIMMTVISEKNTKVGFKPAGGVKDAAAAAEFLGVAARLLGDDWATPATFRFGASSLLTNLLHTLELGDAPKGPQGY</sequence>
<protein>
    <recommendedName>
        <fullName evidence="1">Deoxyribose-phosphate aldolase</fullName>
        <shortName evidence="1">DERA</shortName>
        <ecNumber evidence="1">4.1.2.4</ecNumber>
    </recommendedName>
    <alternativeName>
        <fullName evidence="1">2-deoxy-D-ribose 5-phosphate aldolase</fullName>
    </alternativeName>
    <alternativeName>
        <fullName evidence="1">Phosphodeoxyriboaldolase</fullName>
        <shortName evidence="1">Deoxyriboaldolase</shortName>
    </alternativeName>
</protein>
<reference key="1">
    <citation type="journal article" date="2008" name="PLoS ONE">
        <title>Environmental adaptation: genomic analysis of the piezotolerant and psychrotolerant deep-sea iron reducing bacterium Shewanella piezotolerans WP3.</title>
        <authorList>
            <person name="Wang F."/>
            <person name="Wang J."/>
            <person name="Jian H."/>
            <person name="Zhang B."/>
            <person name="Li S."/>
            <person name="Wang F."/>
            <person name="Zeng X."/>
            <person name="Gao L."/>
            <person name="Bartlett D.H."/>
            <person name="Yu J."/>
            <person name="Hu S."/>
            <person name="Xiao X."/>
        </authorList>
    </citation>
    <scope>NUCLEOTIDE SEQUENCE [LARGE SCALE GENOMIC DNA]</scope>
    <source>
        <strain>WP3 / JCM 13877</strain>
    </source>
</reference>
<gene>
    <name evidence="1" type="primary">deoC</name>
    <name type="ordered locus">swp_1229</name>
</gene>
<dbReference type="EC" id="4.1.2.4" evidence="1"/>
<dbReference type="EMBL" id="CP000472">
    <property type="protein sequence ID" value="ACJ28023.1"/>
    <property type="molecule type" value="Genomic_DNA"/>
</dbReference>
<dbReference type="RefSeq" id="WP_020911401.1">
    <property type="nucleotide sequence ID" value="NC_011566.1"/>
</dbReference>
<dbReference type="SMR" id="B8CKI4"/>
<dbReference type="STRING" id="225849.swp_1229"/>
<dbReference type="KEGG" id="swp:swp_1229"/>
<dbReference type="eggNOG" id="COG0274">
    <property type="taxonomic scope" value="Bacteria"/>
</dbReference>
<dbReference type="HOGENOM" id="CLU_053595_3_1_6"/>
<dbReference type="OrthoDB" id="6579831at2"/>
<dbReference type="UniPathway" id="UPA00002">
    <property type="reaction ID" value="UER00468"/>
</dbReference>
<dbReference type="Proteomes" id="UP000000753">
    <property type="component" value="Chromosome"/>
</dbReference>
<dbReference type="GO" id="GO:0005737">
    <property type="term" value="C:cytoplasm"/>
    <property type="evidence" value="ECO:0007669"/>
    <property type="project" value="UniProtKB-SubCell"/>
</dbReference>
<dbReference type="GO" id="GO:0004139">
    <property type="term" value="F:deoxyribose-phosphate aldolase activity"/>
    <property type="evidence" value="ECO:0007669"/>
    <property type="project" value="UniProtKB-UniRule"/>
</dbReference>
<dbReference type="GO" id="GO:0006018">
    <property type="term" value="P:2-deoxyribose 1-phosphate catabolic process"/>
    <property type="evidence" value="ECO:0007669"/>
    <property type="project" value="UniProtKB-UniRule"/>
</dbReference>
<dbReference type="GO" id="GO:0016052">
    <property type="term" value="P:carbohydrate catabolic process"/>
    <property type="evidence" value="ECO:0007669"/>
    <property type="project" value="TreeGrafter"/>
</dbReference>
<dbReference type="GO" id="GO:0009264">
    <property type="term" value="P:deoxyribonucleotide catabolic process"/>
    <property type="evidence" value="ECO:0007669"/>
    <property type="project" value="InterPro"/>
</dbReference>
<dbReference type="CDD" id="cd00959">
    <property type="entry name" value="DeoC"/>
    <property type="match status" value="1"/>
</dbReference>
<dbReference type="Gene3D" id="3.20.20.70">
    <property type="entry name" value="Aldolase class I"/>
    <property type="match status" value="1"/>
</dbReference>
<dbReference type="HAMAP" id="MF_00592">
    <property type="entry name" value="DeoC_type2"/>
    <property type="match status" value="1"/>
</dbReference>
<dbReference type="InterPro" id="IPR013785">
    <property type="entry name" value="Aldolase_TIM"/>
</dbReference>
<dbReference type="InterPro" id="IPR011343">
    <property type="entry name" value="DeoC"/>
</dbReference>
<dbReference type="InterPro" id="IPR002915">
    <property type="entry name" value="DeoC/FbaB/LacD_aldolase"/>
</dbReference>
<dbReference type="InterPro" id="IPR023649">
    <property type="entry name" value="DeoC_typeII"/>
</dbReference>
<dbReference type="NCBIfam" id="TIGR00126">
    <property type="entry name" value="deoC"/>
    <property type="match status" value="1"/>
</dbReference>
<dbReference type="PANTHER" id="PTHR10889">
    <property type="entry name" value="DEOXYRIBOSE-PHOSPHATE ALDOLASE"/>
    <property type="match status" value="1"/>
</dbReference>
<dbReference type="PANTHER" id="PTHR10889:SF3">
    <property type="entry name" value="DEOXYRIBOSE-PHOSPHATE ALDOLASE"/>
    <property type="match status" value="1"/>
</dbReference>
<dbReference type="Pfam" id="PF01791">
    <property type="entry name" value="DeoC"/>
    <property type="match status" value="1"/>
</dbReference>
<dbReference type="PIRSF" id="PIRSF001357">
    <property type="entry name" value="DeoC"/>
    <property type="match status" value="1"/>
</dbReference>
<dbReference type="SMART" id="SM01133">
    <property type="entry name" value="DeoC"/>
    <property type="match status" value="1"/>
</dbReference>
<dbReference type="SUPFAM" id="SSF51569">
    <property type="entry name" value="Aldolase"/>
    <property type="match status" value="1"/>
</dbReference>
<proteinExistence type="inferred from homology"/>
<comment type="function">
    <text evidence="1">Catalyzes a reversible aldol reaction between acetaldehyde and D-glyceraldehyde 3-phosphate to generate 2-deoxy-D-ribose 5-phosphate.</text>
</comment>
<comment type="catalytic activity">
    <reaction evidence="1">
        <text>2-deoxy-D-ribose 5-phosphate = D-glyceraldehyde 3-phosphate + acetaldehyde</text>
        <dbReference type="Rhea" id="RHEA:12821"/>
        <dbReference type="ChEBI" id="CHEBI:15343"/>
        <dbReference type="ChEBI" id="CHEBI:59776"/>
        <dbReference type="ChEBI" id="CHEBI:62877"/>
        <dbReference type="EC" id="4.1.2.4"/>
    </reaction>
</comment>
<comment type="pathway">
    <text evidence="1">Carbohydrate degradation; 2-deoxy-D-ribose 1-phosphate degradation; D-glyceraldehyde 3-phosphate and acetaldehyde from 2-deoxy-alpha-D-ribose 1-phosphate: step 2/2.</text>
</comment>
<comment type="subcellular location">
    <subcellularLocation>
        <location evidence="1">Cytoplasm</location>
    </subcellularLocation>
</comment>
<comment type="similarity">
    <text evidence="1">Belongs to the DeoC/FbaB aldolase family. DeoC type 2 subfamily.</text>
</comment>
<feature type="chain" id="PRO_1000129813" description="Deoxyribose-phosphate aldolase">
    <location>
        <begin position="1"/>
        <end position="257"/>
    </location>
</feature>
<feature type="active site" description="Proton donor/acceptor" evidence="1">
    <location>
        <position position="102"/>
    </location>
</feature>
<feature type="active site" description="Schiff-base intermediate with acetaldehyde" evidence="1">
    <location>
        <position position="166"/>
    </location>
</feature>
<feature type="active site" description="Proton donor/acceptor" evidence="1">
    <location>
        <position position="198"/>
    </location>
</feature>
<name>DEOC_SHEPW</name>